<sequence>MIHDPAEPPAAAAEPPLDTASPDGAAPVADTRPAAGNQDIDAATASLAVEEDDEARLPEVEDEPEAEPAQAGAGPMAVGRSAIARAVRLAPTSPGVYRMLNAERDVLYVGKAKNVKKRLASYARPTGQVLRIARMIALTVEVEVISTTTETEALLLEANLIKQLRPRFNVQLRDDKSFPYILITSDHWAPQILKHRGAQSRPGRYFGPFASAGAVNRTITALQRAFLVRSCTDSFFESRTRPCLLYQIRRCAGPCTGEVDFPGYSELVREATDFLSGRSRAVKELLAAEMEKASGELEFETAALYRDRLAALSAIQSQQGINPRTVEEADVFAIHQDGGYSCVEVFFFRTGQNWGNRAYFPRAEKSFTPAEVLGAFVAQFYDDKPPPKLILLSHEIEEAELLADALCVKAGHKVEITVPKRGEKKELVAHAQTNAREALGRKLADTATQARLLENLATTLGLPKTPQRIEVYDNSHIQGTNAVGAMIVAGPDGFIKNQYRKFNIRSEGLTPGDDYAMMREVLQRRFKRLVTSQAEGDGEAAAKAKPKDDDVPQWPDLVIIDGGRGQLNAAREALSGIGLTDQVTLLGVAKGPDRDAGRETLFLPDRDAIKLEPRDPVLYFIQRLRDEAHRFVIGSHRTLRKKDIREAGLQEIPGIGPTRKRALLLHFGTLKEIERASIADLGKVPGISAESAKRIFEFFHARPD</sequence>
<feature type="chain" id="PRO_0000264936" description="UvrABC system protein C">
    <location>
        <begin position="1"/>
        <end position="704"/>
    </location>
</feature>
<feature type="domain" description="GIY-YIG" evidence="1">
    <location>
        <begin position="92"/>
        <end position="170"/>
    </location>
</feature>
<feature type="domain" description="UVR" evidence="1">
    <location>
        <begin position="280"/>
        <end position="315"/>
    </location>
</feature>
<feature type="region of interest" description="Disordered" evidence="2">
    <location>
        <begin position="1"/>
        <end position="77"/>
    </location>
</feature>
<feature type="compositionally biased region" description="Acidic residues" evidence="2">
    <location>
        <begin position="49"/>
        <end position="66"/>
    </location>
</feature>
<feature type="compositionally biased region" description="Low complexity" evidence="2">
    <location>
        <begin position="67"/>
        <end position="77"/>
    </location>
</feature>
<evidence type="ECO:0000255" key="1">
    <source>
        <dbReference type="HAMAP-Rule" id="MF_00203"/>
    </source>
</evidence>
<evidence type="ECO:0000256" key="2">
    <source>
        <dbReference type="SAM" id="MobiDB-lite"/>
    </source>
</evidence>
<gene>
    <name evidence="1" type="primary">uvrC</name>
    <name type="ordered locus">RPA1171</name>
</gene>
<dbReference type="EMBL" id="BX572596">
    <property type="protein sequence ID" value="CAE26614.1"/>
    <property type="molecule type" value="Genomic_DNA"/>
</dbReference>
<dbReference type="RefSeq" id="WP_011156735.1">
    <property type="nucleotide sequence ID" value="NZ_CP116810.1"/>
</dbReference>
<dbReference type="SMR" id="Q6NAL3"/>
<dbReference type="STRING" id="258594.RPA1171"/>
<dbReference type="GeneID" id="66892192"/>
<dbReference type="eggNOG" id="COG0322">
    <property type="taxonomic scope" value="Bacteria"/>
</dbReference>
<dbReference type="HOGENOM" id="CLU_014841_3_0_5"/>
<dbReference type="PhylomeDB" id="Q6NAL3"/>
<dbReference type="GO" id="GO:0005737">
    <property type="term" value="C:cytoplasm"/>
    <property type="evidence" value="ECO:0007669"/>
    <property type="project" value="UniProtKB-SubCell"/>
</dbReference>
<dbReference type="GO" id="GO:0009380">
    <property type="term" value="C:excinuclease repair complex"/>
    <property type="evidence" value="ECO:0007669"/>
    <property type="project" value="InterPro"/>
</dbReference>
<dbReference type="GO" id="GO:0003677">
    <property type="term" value="F:DNA binding"/>
    <property type="evidence" value="ECO:0007669"/>
    <property type="project" value="UniProtKB-UniRule"/>
</dbReference>
<dbReference type="GO" id="GO:0009381">
    <property type="term" value="F:excinuclease ABC activity"/>
    <property type="evidence" value="ECO:0007669"/>
    <property type="project" value="UniProtKB-UniRule"/>
</dbReference>
<dbReference type="GO" id="GO:0006289">
    <property type="term" value="P:nucleotide-excision repair"/>
    <property type="evidence" value="ECO:0007669"/>
    <property type="project" value="UniProtKB-UniRule"/>
</dbReference>
<dbReference type="GO" id="GO:0009432">
    <property type="term" value="P:SOS response"/>
    <property type="evidence" value="ECO:0007669"/>
    <property type="project" value="UniProtKB-UniRule"/>
</dbReference>
<dbReference type="CDD" id="cd10434">
    <property type="entry name" value="GIY-YIG_UvrC_Cho"/>
    <property type="match status" value="1"/>
</dbReference>
<dbReference type="FunFam" id="3.30.420.340:FF:000001">
    <property type="entry name" value="UvrABC system protein C"/>
    <property type="match status" value="1"/>
</dbReference>
<dbReference type="FunFam" id="3.40.1440.10:FF:000001">
    <property type="entry name" value="UvrABC system protein C"/>
    <property type="match status" value="1"/>
</dbReference>
<dbReference type="Gene3D" id="1.10.150.20">
    <property type="entry name" value="5' to 3' exonuclease, C-terminal subdomain"/>
    <property type="match status" value="1"/>
</dbReference>
<dbReference type="Gene3D" id="3.40.1440.10">
    <property type="entry name" value="GIY-YIG endonuclease"/>
    <property type="match status" value="1"/>
</dbReference>
<dbReference type="Gene3D" id="4.10.860.10">
    <property type="entry name" value="UVR domain"/>
    <property type="match status" value="1"/>
</dbReference>
<dbReference type="Gene3D" id="3.30.420.340">
    <property type="entry name" value="UvrC, RNAse H endonuclease domain"/>
    <property type="match status" value="1"/>
</dbReference>
<dbReference type="HAMAP" id="MF_00203">
    <property type="entry name" value="UvrC"/>
    <property type="match status" value="1"/>
</dbReference>
<dbReference type="InterPro" id="IPR000305">
    <property type="entry name" value="GIY-YIG_endonuc"/>
</dbReference>
<dbReference type="InterPro" id="IPR035901">
    <property type="entry name" value="GIY-YIG_endonuc_sf"/>
</dbReference>
<dbReference type="InterPro" id="IPR047296">
    <property type="entry name" value="GIY-YIG_UvrC_Cho"/>
</dbReference>
<dbReference type="InterPro" id="IPR003583">
    <property type="entry name" value="Hlx-hairpin-Hlx_DNA-bd_motif"/>
</dbReference>
<dbReference type="InterPro" id="IPR010994">
    <property type="entry name" value="RuvA_2-like"/>
</dbReference>
<dbReference type="InterPro" id="IPR001943">
    <property type="entry name" value="UVR_dom"/>
</dbReference>
<dbReference type="InterPro" id="IPR036876">
    <property type="entry name" value="UVR_dom_sf"/>
</dbReference>
<dbReference type="InterPro" id="IPR050066">
    <property type="entry name" value="UvrABC_protein_C"/>
</dbReference>
<dbReference type="InterPro" id="IPR004791">
    <property type="entry name" value="UvrC"/>
</dbReference>
<dbReference type="InterPro" id="IPR001162">
    <property type="entry name" value="UvrC_RNase_H_dom"/>
</dbReference>
<dbReference type="InterPro" id="IPR038476">
    <property type="entry name" value="UvrC_RNase_H_dom_sf"/>
</dbReference>
<dbReference type="NCBIfam" id="NF001824">
    <property type="entry name" value="PRK00558.1-5"/>
    <property type="match status" value="1"/>
</dbReference>
<dbReference type="NCBIfam" id="TIGR00194">
    <property type="entry name" value="uvrC"/>
    <property type="match status" value="1"/>
</dbReference>
<dbReference type="PANTHER" id="PTHR30562:SF1">
    <property type="entry name" value="UVRABC SYSTEM PROTEIN C"/>
    <property type="match status" value="1"/>
</dbReference>
<dbReference type="PANTHER" id="PTHR30562">
    <property type="entry name" value="UVRC/OXIDOREDUCTASE"/>
    <property type="match status" value="1"/>
</dbReference>
<dbReference type="Pfam" id="PF01541">
    <property type="entry name" value="GIY-YIG"/>
    <property type="match status" value="1"/>
</dbReference>
<dbReference type="Pfam" id="PF14520">
    <property type="entry name" value="HHH_5"/>
    <property type="match status" value="1"/>
</dbReference>
<dbReference type="Pfam" id="PF02151">
    <property type="entry name" value="UVR"/>
    <property type="match status" value="1"/>
</dbReference>
<dbReference type="Pfam" id="PF22920">
    <property type="entry name" value="UvrC_RNaseH"/>
    <property type="match status" value="1"/>
</dbReference>
<dbReference type="Pfam" id="PF08459">
    <property type="entry name" value="UvrC_RNaseH_dom"/>
    <property type="match status" value="1"/>
</dbReference>
<dbReference type="SMART" id="SM00465">
    <property type="entry name" value="GIYc"/>
    <property type="match status" value="1"/>
</dbReference>
<dbReference type="SMART" id="SM00278">
    <property type="entry name" value="HhH1"/>
    <property type="match status" value="2"/>
</dbReference>
<dbReference type="SUPFAM" id="SSF46600">
    <property type="entry name" value="C-terminal UvrC-binding domain of UvrB"/>
    <property type="match status" value="1"/>
</dbReference>
<dbReference type="SUPFAM" id="SSF82771">
    <property type="entry name" value="GIY-YIG endonuclease"/>
    <property type="match status" value="1"/>
</dbReference>
<dbReference type="SUPFAM" id="SSF47781">
    <property type="entry name" value="RuvA domain 2-like"/>
    <property type="match status" value="1"/>
</dbReference>
<dbReference type="PROSITE" id="PS50164">
    <property type="entry name" value="GIY_YIG"/>
    <property type="match status" value="1"/>
</dbReference>
<dbReference type="PROSITE" id="PS50151">
    <property type="entry name" value="UVR"/>
    <property type="match status" value="1"/>
</dbReference>
<dbReference type="PROSITE" id="PS50165">
    <property type="entry name" value="UVRC"/>
    <property type="match status" value="1"/>
</dbReference>
<reference key="1">
    <citation type="journal article" date="2004" name="Nat. Biotechnol.">
        <title>Complete genome sequence of the metabolically versatile photosynthetic bacterium Rhodopseudomonas palustris.</title>
        <authorList>
            <person name="Larimer F.W."/>
            <person name="Chain P."/>
            <person name="Hauser L."/>
            <person name="Lamerdin J.E."/>
            <person name="Malfatti S."/>
            <person name="Do L."/>
            <person name="Land M.L."/>
            <person name="Pelletier D.A."/>
            <person name="Beatty J.T."/>
            <person name="Lang A.S."/>
            <person name="Tabita F.R."/>
            <person name="Gibson J.L."/>
            <person name="Hanson T.E."/>
            <person name="Bobst C."/>
            <person name="Torres y Torres J.L."/>
            <person name="Peres C."/>
            <person name="Harrison F.H."/>
            <person name="Gibson J."/>
            <person name="Harwood C.S."/>
        </authorList>
    </citation>
    <scope>NUCLEOTIDE SEQUENCE [LARGE SCALE GENOMIC DNA]</scope>
    <source>
        <strain>ATCC BAA-98 / CGA009</strain>
    </source>
</reference>
<keyword id="KW-0963">Cytoplasm</keyword>
<keyword id="KW-0227">DNA damage</keyword>
<keyword id="KW-0228">DNA excision</keyword>
<keyword id="KW-0234">DNA repair</keyword>
<keyword id="KW-0267">Excision nuclease</keyword>
<keyword id="KW-0742">SOS response</keyword>
<accession>Q6NAL3</accession>
<proteinExistence type="inferred from homology"/>
<organism>
    <name type="scientific">Rhodopseudomonas palustris (strain ATCC BAA-98 / CGA009)</name>
    <dbReference type="NCBI Taxonomy" id="258594"/>
    <lineage>
        <taxon>Bacteria</taxon>
        <taxon>Pseudomonadati</taxon>
        <taxon>Pseudomonadota</taxon>
        <taxon>Alphaproteobacteria</taxon>
        <taxon>Hyphomicrobiales</taxon>
        <taxon>Nitrobacteraceae</taxon>
        <taxon>Rhodopseudomonas</taxon>
    </lineage>
</organism>
<name>UVRC_RHOPA</name>
<comment type="function">
    <text evidence="1">The UvrABC repair system catalyzes the recognition and processing of DNA lesions. UvrC both incises the 5' and 3' sides of the lesion. The N-terminal half is responsible for the 3' incision and the C-terminal half is responsible for the 5' incision.</text>
</comment>
<comment type="subunit">
    <text evidence="1">Interacts with UvrB in an incision complex.</text>
</comment>
<comment type="subcellular location">
    <subcellularLocation>
        <location evidence="1">Cytoplasm</location>
    </subcellularLocation>
</comment>
<comment type="similarity">
    <text evidence="1">Belongs to the UvrC family.</text>
</comment>
<protein>
    <recommendedName>
        <fullName evidence="1">UvrABC system protein C</fullName>
        <shortName evidence="1">Protein UvrC</shortName>
    </recommendedName>
    <alternativeName>
        <fullName evidence="1">Excinuclease ABC subunit C</fullName>
    </alternativeName>
</protein>